<name>GLO2_ECOSE</name>
<sequence length="251" mass="28420">MNLNSIPAFDDNYIWVLNDEAGRCLIVDPGDAEPVLNAIAANNWQPEAIFLTHHHHDHVGGVKELVEKFPQIVVYGPQETQDKGTTQVVKDGETAFVLGHEFSVIATPGHTLGHICYFSKPYLFCGDTLFSGGCGRLFEGTASQMYQSINKLSALPDDTLVCCAHEYTLSNMKFALSILPHDLSINDYYRKVKELRAKNQITLPVILKNERQINVFLRTEDIDLINVINEETLLQQPEERFAWLRSKKDRF</sequence>
<dbReference type="EC" id="3.1.2.6" evidence="1"/>
<dbReference type="EMBL" id="AP009240">
    <property type="protein sequence ID" value="BAG75732.1"/>
    <property type="molecule type" value="Genomic_DNA"/>
</dbReference>
<dbReference type="RefSeq" id="WP_001052710.1">
    <property type="nucleotide sequence ID" value="NC_011415.1"/>
</dbReference>
<dbReference type="SMR" id="B6HZS5"/>
<dbReference type="KEGG" id="ecy:ECSE_0208"/>
<dbReference type="HOGENOM" id="CLU_030571_4_1_6"/>
<dbReference type="UniPathway" id="UPA00619">
    <property type="reaction ID" value="UER00676"/>
</dbReference>
<dbReference type="Proteomes" id="UP000008199">
    <property type="component" value="Chromosome"/>
</dbReference>
<dbReference type="GO" id="GO:0004416">
    <property type="term" value="F:hydroxyacylglutathione hydrolase activity"/>
    <property type="evidence" value="ECO:0007669"/>
    <property type="project" value="UniProtKB-UniRule"/>
</dbReference>
<dbReference type="GO" id="GO:0046872">
    <property type="term" value="F:metal ion binding"/>
    <property type="evidence" value="ECO:0007669"/>
    <property type="project" value="UniProtKB-KW"/>
</dbReference>
<dbReference type="GO" id="GO:0019243">
    <property type="term" value="P:methylglyoxal catabolic process to D-lactate via S-lactoyl-glutathione"/>
    <property type="evidence" value="ECO:0007669"/>
    <property type="project" value="InterPro"/>
</dbReference>
<dbReference type="CDD" id="cd07723">
    <property type="entry name" value="hydroxyacylglutathione_hydrolase_MBL-fold"/>
    <property type="match status" value="1"/>
</dbReference>
<dbReference type="FunFam" id="3.60.15.10:FF:000012">
    <property type="entry name" value="Hydroxyacylglutathione hydrolase"/>
    <property type="match status" value="1"/>
</dbReference>
<dbReference type="Gene3D" id="3.60.15.10">
    <property type="entry name" value="Ribonuclease Z/Hydroxyacylglutathione hydrolase-like"/>
    <property type="match status" value="1"/>
</dbReference>
<dbReference type="HAMAP" id="MF_01374">
    <property type="entry name" value="Glyoxalase_2"/>
    <property type="match status" value="1"/>
</dbReference>
<dbReference type="InterPro" id="IPR035680">
    <property type="entry name" value="Clx_II_MBL"/>
</dbReference>
<dbReference type="InterPro" id="IPR050110">
    <property type="entry name" value="Glyoxalase_II_hydrolase"/>
</dbReference>
<dbReference type="InterPro" id="IPR032282">
    <property type="entry name" value="HAGH_C"/>
</dbReference>
<dbReference type="InterPro" id="IPR017782">
    <property type="entry name" value="Hydroxyacylglutathione_Hdrlase"/>
</dbReference>
<dbReference type="InterPro" id="IPR001279">
    <property type="entry name" value="Metallo-B-lactamas"/>
</dbReference>
<dbReference type="InterPro" id="IPR036866">
    <property type="entry name" value="RibonucZ/Hydroxyglut_hydro"/>
</dbReference>
<dbReference type="NCBIfam" id="TIGR03413">
    <property type="entry name" value="GSH_gloB"/>
    <property type="match status" value="1"/>
</dbReference>
<dbReference type="NCBIfam" id="NF007597">
    <property type="entry name" value="PRK10241.1"/>
    <property type="match status" value="1"/>
</dbReference>
<dbReference type="PANTHER" id="PTHR43705">
    <property type="entry name" value="HYDROXYACYLGLUTATHIONE HYDROLASE"/>
    <property type="match status" value="1"/>
</dbReference>
<dbReference type="PANTHER" id="PTHR43705:SF1">
    <property type="entry name" value="HYDROXYACYLGLUTATHIONE HYDROLASE GLOB"/>
    <property type="match status" value="1"/>
</dbReference>
<dbReference type="Pfam" id="PF16123">
    <property type="entry name" value="HAGH_C"/>
    <property type="match status" value="1"/>
</dbReference>
<dbReference type="Pfam" id="PF00753">
    <property type="entry name" value="Lactamase_B"/>
    <property type="match status" value="1"/>
</dbReference>
<dbReference type="PIRSF" id="PIRSF005457">
    <property type="entry name" value="Glx"/>
    <property type="match status" value="1"/>
</dbReference>
<dbReference type="SMART" id="SM00849">
    <property type="entry name" value="Lactamase_B"/>
    <property type="match status" value="1"/>
</dbReference>
<dbReference type="SUPFAM" id="SSF56281">
    <property type="entry name" value="Metallo-hydrolase/oxidoreductase"/>
    <property type="match status" value="1"/>
</dbReference>
<organism>
    <name type="scientific">Escherichia coli (strain SE11)</name>
    <dbReference type="NCBI Taxonomy" id="409438"/>
    <lineage>
        <taxon>Bacteria</taxon>
        <taxon>Pseudomonadati</taxon>
        <taxon>Pseudomonadota</taxon>
        <taxon>Gammaproteobacteria</taxon>
        <taxon>Enterobacterales</taxon>
        <taxon>Enterobacteriaceae</taxon>
        <taxon>Escherichia</taxon>
    </lineage>
</organism>
<proteinExistence type="inferred from homology"/>
<comment type="function">
    <text evidence="1">Thiolesterase that catalyzes the hydrolysis of S-D-lactoyl-glutathione to form glutathione and D-lactic acid.</text>
</comment>
<comment type="catalytic activity">
    <reaction evidence="1">
        <text>an S-(2-hydroxyacyl)glutathione + H2O = a 2-hydroxy carboxylate + glutathione + H(+)</text>
        <dbReference type="Rhea" id="RHEA:21864"/>
        <dbReference type="ChEBI" id="CHEBI:15377"/>
        <dbReference type="ChEBI" id="CHEBI:15378"/>
        <dbReference type="ChEBI" id="CHEBI:57925"/>
        <dbReference type="ChEBI" id="CHEBI:58896"/>
        <dbReference type="ChEBI" id="CHEBI:71261"/>
        <dbReference type="EC" id="3.1.2.6"/>
    </reaction>
</comment>
<comment type="cofactor">
    <cofactor evidence="1">
        <name>Zn(2+)</name>
        <dbReference type="ChEBI" id="CHEBI:29105"/>
    </cofactor>
    <text evidence="1">Binds 2 Zn(2+) ions per subunit.</text>
</comment>
<comment type="pathway">
    <text evidence="1">Secondary metabolite metabolism; methylglyoxal degradation; (R)-lactate from methylglyoxal: step 2/2.</text>
</comment>
<comment type="subunit">
    <text evidence="1">Monomer.</text>
</comment>
<comment type="similarity">
    <text evidence="1">Belongs to the metallo-beta-lactamase superfamily. Glyoxalase II family.</text>
</comment>
<accession>B6HZS5</accession>
<protein>
    <recommendedName>
        <fullName evidence="1">Hydroxyacylglutathione hydrolase</fullName>
        <ecNumber evidence="1">3.1.2.6</ecNumber>
    </recommendedName>
    <alternativeName>
        <fullName evidence="1">Glyoxalase II</fullName>
        <shortName evidence="1">Glx II</shortName>
    </alternativeName>
</protein>
<feature type="chain" id="PRO_1000144764" description="Hydroxyacylglutathione hydrolase">
    <location>
        <begin position="1"/>
        <end position="251"/>
    </location>
</feature>
<feature type="binding site" evidence="1">
    <location>
        <position position="53"/>
    </location>
    <ligand>
        <name>Zn(2+)</name>
        <dbReference type="ChEBI" id="CHEBI:29105"/>
        <label>1</label>
    </ligand>
</feature>
<feature type="binding site" evidence="1">
    <location>
        <position position="55"/>
    </location>
    <ligand>
        <name>Zn(2+)</name>
        <dbReference type="ChEBI" id="CHEBI:29105"/>
        <label>1</label>
    </ligand>
</feature>
<feature type="binding site" evidence="1">
    <location>
        <position position="57"/>
    </location>
    <ligand>
        <name>Zn(2+)</name>
        <dbReference type="ChEBI" id="CHEBI:29105"/>
        <label>2</label>
    </ligand>
</feature>
<feature type="binding site" evidence="1">
    <location>
        <position position="58"/>
    </location>
    <ligand>
        <name>Zn(2+)</name>
        <dbReference type="ChEBI" id="CHEBI:29105"/>
        <label>2</label>
    </ligand>
</feature>
<feature type="binding site" evidence="1">
    <location>
        <position position="110"/>
    </location>
    <ligand>
        <name>Zn(2+)</name>
        <dbReference type="ChEBI" id="CHEBI:29105"/>
        <label>1</label>
    </ligand>
</feature>
<feature type="binding site" evidence="1">
    <location>
        <position position="127"/>
    </location>
    <ligand>
        <name>Zn(2+)</name>
        <dbReference type="ChEBI" id="CHEBI:29105"/>
        <label>1</label>
    </ligand>
</feature>
<feature type="binding site" evidence="1">
    <location>
        <position position="127"/>
    </location>
    <ligand>
        <name>Zn(2+)</name>
        <dbReference type="ChEBI" id="CHEBI:29105"/>
        <label>2</label>
    </ligand>
</feature>
<feature type="binding site" evidence="1">
    <location>
        <position position="165"/>
    </location>
    <ligand>
        <name>Zn(2+)</name>
        <dbReference type="ChEBI" id="CHEBI:29105"/>
        <label>2</label>
    </ligand>
</feature>
<evidence type="ECO:0000255" key="1">
    <source>
        <dbReference type="HAMAP-Rule" id="MF_01374"/>
    </source>
</evidence>
<gene>
    <name evidence="1" type="primary">gloB</name>
    <name type="ordered locus">ECSE_0208</name>
</gene>
<reference key="1">
    <citation type="journal article" date="2008" name="DNA Res.">
        <title>Complete genome sequence and comparative analysis of the wild-type commensal Escherichia coli strain SE11 isolated from a healthy adult.</title>
        <authorList>
            <person name="Oshima K."/>
            <person name="Toh H."/>
            <person name="Ogura Y."/>
            <person name="Sasamoto H."/>
            <person name="Morita H."/>
            <person name="Park S.-H."/>
            <person name="Ooka T."/>
            <person name="Iyoda S."/>
            <person name="Taylor T.D."/>
            <person name="Hayashi T."/>
            <person name="Itoh K."/>
            <person name="Hattori M."/>
        </authorList>
    </citation>
    <scope>NUCLEOTIDE SEQUENCE [LARGE SCALE GENOMIC DNA]</scope>
    <source>
        <strain>SE11</strain>
    </source>
</reference>
<keyword id="KW-0378">Hydrolase</keyword>
<keyword id="KW-0479">Metal-binding</keyword>
<keyword id="KW-0862">Zinc</keyword>